<feature type="chain" id="PRO_0000219345" description="Cyclic nucleotide-gated ion channel 17">
    <location>
        <begin position="1"/>
        <end position="720"/>
    </location>
</feature>
<feature type="topological domain" description="Cytoplasmic" evidence="2">
    <location>
        <begin position="1"/>
        <end position="85"/>
    </location>
</feature>
<feature type="transmembrane region" description="Helical; Name=H1" evidence="2">
    <location>
        <begin position="86"/>
        <end position="106"/>
    </location>
</feature>
<feature type="topological domain" description="Extracellular" evidence="2">
    <location>
        <begin position="107"/>
        <end position="121"/>
    </location>
</feature>
<feature type="transmembrane region" description="Helical; Name=H2" evidence="2">
    <location>
        <begin position="122"/>
        <end position="142"/>
    </location>
</feature>
<feature type="topological domain" description="Cytoplasmic" evidence="2">
    <location>
        <begin position="143"/>
        <end position="178"/>
    </location>
</feature>
<feature type="transmembrane region" description="Helical; Name=H3" evidence="2">
    <location>
        <begin position="179"/>
        <end position="199"/>
    </location>
</feature>
<feature type="topological domain" description="Extracellular" evidence="2">
    <location>
        <begin position="200"/>
        <end position="211"/>
    </location>
</feature>
<feature type="transmembrane region" description="Helical; Name=H4" evidence="2">
    <location>
        <begin position="212"/>
        <end position="232"/>
    </location>
</feature>
<feature type="topological domain" description="Cytoplasmic" evidence="2">
    <location>
        <begin position="233"/>
        <end position="252"/>
    </location>
</feature>
<feature type="transmembrane region" description="Helical; Name=H5" evidence="2">
    <location>
        <begin position="253"/>
        <end position="273"/>
    </location>
</feature>
<feature type="topological domain" description="Extracellular" evidence="2">
    <location>
        <begin position="274"/>
        <end position="377"/>
    </location>
</feature>
<feature type="transmembrane region" description="Helical; Name=H6" evidence="2">
    <location>
        <begin position="378"/>
        <end position="398"/>
    </location>
</feature>
<feature type="topological domain" description="Cytoplasmic" evidence="2">
    <location>
        <begin position="399"/>
        <end position="720"/>
    </location>
</feature>
<feature type="domain" description="IQ">
    <location>
        <begin position="617"/>
        <end position="646"/>
    </location>
</feature>
<feature type="region of interest" description="Calmodulin-binding" evidence="1">
    <location>
        <begin position="597"/>
        <end position="612"/>
    </location>
</feature>
<feature type="binding site">
    <location>
        <begin position="481"/>
        <end position="605"/>
    </location>
    <ligand>
        <name>a nucleoside 3',5'-cyclic phosphate</name>
        <dbReference type="ChEBI" id="CHEBI:58464"/>
    </ligand>
</feature>
<feature type="binding site" evidence="1">
    <location>
        <position position="552"/>
    </location>
    <ligand>
        <name>a nucleoside 3',5'-cyclic phosphate</name>
        <dbReference type="ChEBI" id="CHEBI:58464"/>
    </ligand>
</feature>
<comment type="function">
    <text evidence="3 6">Probable cyclic nucleotide-gated ion channel (PubMed:11500563). Forms a functional cation-translocating unit with AHAs that is activated by PSKR1/BAK1 and possibly other BAK1/RLK complexes (PubMed:26071421). Required for PSK-induced protoplast expansion (PubMed:26071421).</text>
</comment>
<comment type="subunit">
    <text evidence="3 5">Homotetramer or heterotetramer (Probable). Part of a functional complex containing PSKR1, BAK1, CNGC17, and AHA (PubMed:26071421). Interacts with AHA1, AHA2, and BAK1, but not with PSKR1 or BRI1 (PubMed:26071421).</text>
</comment>
<comment type="subcellular location">
    <subcellularLocation>
        <location evidence="3">Cell membrane</location>
        <topology evidence="5">Multi-pass membrane protein</topology>
    </subcellularLocation>
</comment>
<comment type="domain">
    <text evidence="1">The binding of calmodulin to the C-terminus might interfere with cyclic nucleotide binding and thus channel activation.</text>
</comment>
<comment type="similarity">
    <text evidence="5">Belongs to the cyclic nucleotide-gated cation channel (TC 1.A.1.5) family.</text>
</comment>
<comment type="sequence caution" evidence="5">
    <conflict type="erroneous gene model prediction">
        <sequence resource="EMBL-CDS" id="CAB81029"/>
    </conflict>
</comment>
<reference key="1">
    <citation type="journal article" date="1999" name="Nature">
        <title>Sequence and analysis of chromosome 4 of the plant Arabidopsis thaliana.</title>
        <authorList>
            <person name="Mayer K.F.X."/>
            <person name="Schueller C."/>
            <person name="Wambutt R."/>
            <person name="Murphy G."/>
            <person name="Volckaert G."/>
            <person name="Pohl T."/>
            <person name="Duesterhoeft A."/>
            <person name="Stiekema W."/>
            <person name="Entian K.-D."/>
            <person name="Terryn N."/>
            <person name="Harris B."/>
            <person name="Ansorge W."/>
            <person name="Brandt P."/>
            <person name="Grivell L.A."/>
            <person name="Rieger M."/>
            <person name="Weichselgartner M."/>
            <person name="de Simone V."/>
            <person name="Obermaier B."/>
            <person name="Mache R."/>
            <person name="Mueller M."/>
            <person name="Kreis M."/>
            <person name="Delseny M."/>
            <person name="Puigdomenech P."/>
            <person name="Watson M."/>
            <person name="Schmidtheini T."/>
            <person name="Reichert B."/>
            <person name="Portetelle D."/>
            <person name="Perez-Alonso M."/>
            <person name="Boutry M."/>
            <person name="Bancroft I."/>
            <person name="Vos P."/>
            <person name="Hoheisel J."/>
            <person name="Zimmermann W."/>
            <person name="Wedler H."/>
            <person name="Ridley P."/>
            <person name="Langham S.-A."/>
            <person name="McCullagh B."/>
            <person name="Bilham L."/>
            <person name="Robben J."/>
            <person name="van der Schueren J."/>
            <person name="Grymonprez B."/>
            <person name="Chuang Y.-J."/>
            <person name="Vandenbussche F."/>
            <person name="Braeken M."/>
            <person name="Weltjens I."/>
            <person name="Voet M."/>
            <person name="Bastiaens I."/>
            <person name="Aert R."/>
            <person name="Defoor E."/>
            <person name="Weitzenegger T."/>
            <person name="Bothe G."/>
            <person name="Ramsperger U."/>
            <person name="Hilbert H."/>
            <person name="Braun M."/>
            <person name="Holzer E."/>
            <person name="Brandt A."/>
            <person name="Peters S."/>
            <person name="van Staveren M."/>
            <person name="Dirkse W."/>
            <person name="Mooijman P."/>
            <person name="Klein Lankhorst R."/>
            <person name="Rose M."/>
            <person name="Hauf J."/>
            <person name="Koetter P."/>
            <person name="Berneiser S."/>
            <person name="Hempel S."/>
            <person name="Feldpausch M."/>
            <person name="Lamberth S."/>
            <person name="Van den Daele H."/>
            <person name="De Keyser A."/>
            <person name="Buysshaert C."/>
            <person name="Gielen J."/>
            <person name="Villarroel R."/>
            <person name="De Clercq R."/>
            <person name="van Montagu M."/>
            <person name="Rogers J."/>
            <person name="Cronin A."/>
            <person name="Quail M.A."/>
            <person name="Bray-Allen S."/>
            <person name="Clark L."/>
            <person name="Doggett J."/>
            <person name="Hall S."/>
            <person name="Kay M."/>
            <person name="Lennard N."/>
            <person name="McLay K."/>
            <person name="Mayes R."/>
            <person name="Pettett A."/>
            <person name="Rajandream M.A."/>
            <person name="Lyne M."/>
            <person name="Benes V."/>
            <person name="Rechmann S."/>
            <person name="Borkova D."/>
            <person name="Bloecker H."/>
            <person name="Scharfe M."/>
            <person name="Grimm M."/>
            <person name="Loehnert T.-H."/>
            <person name="Dose S."/>
            <person name="de Haan M."/>
            <person name="Maarse A.C."/>
            <person name="Schaefer M."/>
            <person name="Mueller-Auer S."/>
            <person name="Gabel C."/>
            <person name="Fuchs M."/>
            <person name="Fartmann B."/>
            <person name="Granderath K."/>
            <person name="Dauner D."/>
            <person name="Herzl A."/>
            <person name="Neumann S."/>
            <person name="Argiriou A."/>
            <person name="Vitale D."/>
            <person name="Liguori R."/>
            <person name="Piravandi E."/>
            <person name="Massenet O."/>
            <person name="Quigley F."/>
            <person name="Clabauld G."/>
            <person name="Muendlein A."/>
            <person name="Felber R."/>
            <person name="Schnabl S."/>
            <person name="Hiller R."/>
            <person name="Schmidt W."/>
            <person name="Lecharny A."/>
            <person name="Aubourg S."/>
            <person name="Chefdor F."/>
            <person name="Cooke R."/>
            <person name="Berger C."/>
            <person name="Monfort A."/>
            <person name="Casacuberta E."/>
            <person name="Gibbons T."/>
            <person name="Weber N."/>
            <person name="Vandenbol M."/>
            <person name="Bargues M."/>
            <person name="Terol J."/>
            <person name="Torres A."/>
            <person name="Perez-Perez A."/>
            <person name="Purnelle B."/>
            <person name="Bent E."/>
            <person name="Johnson S."/>
            <person name="Tacon D."/>
            <person name="Jesse T."/>
            <person name="Heijnen L."/>
            <person name="Schwarz S."/>
            <person name="Scholler P."/>
            <person name="Heber S."/>
            <person name="Francs P."/>
            <person name="Bielke C."/>
            <person name="Frishman D."/>
            <person name="Haase D."/>
            <person name="Lemcke K."/>
            <person name="Mewes H.-W."/>
            <person name="Stocker S."/>
            <person name="Zaccaria P."/>
            <person name="Bevan M."/>
            <person name="Wilson R.K."/>
            <person name="de la Bastide M."/>
            <person name="Habermann K."/>
            <person name="Parnell L."/>
            <person name="Dedhia N."/>
            <person name="Gnoj L."/>
            <person name="Schutz K."/>
            <person name="Huang E."/>
            <person name="Spiegel L."/>
            <person name="Sekhon M."/>
            <person name="Murray J."/>
            <person name="Sheet P."/>
            <person name="Cordes M."/>
            <person name="Abu-Threideh J."/>
            <person name="Stoneking T."/>
            <person name="Kalicki J."/>
            <person name="Graves T."/>
            <person name="Harmon G."/>
            <person name="Edwards J."/>
            <person name="Latreille P."/>
            <person name="Courtney L."/>
            <person name="Cloud J."/>
            <person name="Abbott A."/>
            <person name="Scott K."/>
            <person name="Johnson D."/>
            <person name="Minx P."/>
            <person name="Bentley D."/>
            <person name="Fulton B."/>
            <person name="Miller N."/>
            <person name="Greco T."/>
            <person name="Kemp K."/>
            <person name="Kramer J."/>
            <person name="Fulton L."/>
            <person name="Mardis E."/>
            <person name="Dante M."/>
            <person name="Pepin K."/>
            <person name="Hillier L.W."/>
            <person name="Nelson J."/>
            <person name="Spieth J."/>
            <person name="Ryan E."/>
            <person name="Andrews S."/>
            <person name="Geisel C."/>
            <person name="Layman D."/>
            <person name="Du H."/>
            <person name="Ali J."/>
            <person name="Berghoff A."/>
            <person name="Jones K."/>
            <person name="Drone K."/>
            <person name="Cotton M."/>
            <person name="Joshu C."/>
            <person name="Antonoiu B."/>
            <person name="Zidanic M."/>
            <person name="Strong C."/>
            <person name="Sun H."/>
            <person name="Lamar B."/>
            <person name="Yordan C."/>
            <person name="Ma P."/>
            <person name="Zhong J."/>
            <person name="Preston R."/>
            <person name="Vil D."/>
            <person name="Shekher M."/>
            <person name="Matero A."/>
            <person name="Shah R."/>
            <person name="Swaby I.K."/>
            <person name="O'Shaughnessy A."/>
            <person name="Rodriguez M."/>
            <person name="Hoffman J."/>
            <person name="Till S."/>
            <person name="Granat S."/>
            <person name="Shohdy N."/>
            <person name="Hasegawa A."/>
            <person name="Hameed A."/>
            <person name="Lodhi M."/>
            <person name="Johnson A."/>
            <person name="Chen E."/>
            <person name="Marra M.A."/>
            <person name="Martienssen R."/>
            <person name="McCombie W.R."/>
        </authorList>
    </citation>
    <scope>NUCLEOTIDE SEQUENCE [LARGE SCALE GENOMIC DNA]</scope>
    <source>
        <strain>cv. Columbia</strain>
    </source>
</reference>
<reference key="2">
    <citation type="journal article" date="2017" name="Plant J.">
        <title>Araport11: a complete reannotation of the Arabidopsis thaliana reference genome.</title>
        <authorList>
            <person name="Cheng C.Y."/>
            <person name="Krishnakumar V."/>
            <person name="Chan A.P."/>
            <person name="Thibaud-Nissen F."/>
            <person name="Schobel S."/>
            <person name="Town C.D."/>
        </authorList>
    </citation>
    <scope>GENOME REANNOTATION</scope>
    <source>
        <strain>cv. Columbia</strain>
    </source>
</reference>
<reference key="3">
    <citation type="journal article" date="2003" name="Science">
        <title>Empirical analysis of transcriptional activity in the Arabidopsis genome.</title>
        <authorList>
            <person name="Yamada K."/>
            <person name="Lim J."/>
            <person name="Dale J.M."/>
            <person name="Chen H."/>
            <person name="Shinn P."/>
            <person name="Palm C.J."/>
            <person name="Southwick A.M."/>
            <person name="Wu H.C."/>
            <person name="Kim C.J."/>
            <person name="Nguyen M."/>
            <person name="Pham P.K."/>
            <person name="Cheuk R.F."/>
            <person name="Karlin-Newmann G."/>
            <person name="Liu S.X."/>
            <person name="Lam B."/>
            <person name="Sakano H."/>
            <person name="Wu T."/>
            <person name="Yu G."/>
            <person name="Miranda M."/>
            <person name="Quach H.L."/>
            <person name="Tripp M."/>
            <person name="Chang C.H."/>
            <person name="Lee J.M."/>
            <person name="Toriumi M.J."/>
            <person name="Chan M.M."/>
            <person name="Tang C.C."/>
            <person name="Onodera C.S."/>
            <person name="Deng J.M."/>
            <person name="Akiyama K."/>
            <person name="Ansari Y."/>
            <person name="Arakawa T."/>
            <person name="Banh J."/>
            <person name="Banno F."/>
            <person name="Bowser L."/>
            <person name="Brooks S.Y."/>
            <person name="Carninci P."/>
            <person name="Chao Q."/>
            <person name="Choy N."/>
            <person name="Enju A."/>
            <person name="Goldsmith A.D."/>
            <person name="Gurjal M."/>
            <person name="Hansen N.F."/>
            <person name="Hayashizaki Y."/>
            <person name="Johnson-Hopson C."/>
            <person name="Hsuan V.W."/>
            <person name="Iida K."/>
            <person name="Karnes M."/>
            <person name="Khan S."/>
            <person name="Koesema E."/>
            <person name="Ishida J."/>
            <person name="Jiang P.X."/>
            <person name="Jones T."/>
            <person name="Kawai J."/>
            <person name="Kamiya A."/>
            <person name="Meyers C."/>
            <person name="Nakajima M."/>
            <person name="Narusaka M."/>
            <person name="Seki M."/>
            <person name="Sakurai T."/>
            <person name="Satou M."/>
            <person name="Tamse R."/>
            <person name="Vaysberg M."/>
            <person name="Wallender E.K."/>
            <person name="Wong C."/>
            <person name="Yamamura Y."/>
            <person name="Yuan S."/>
            <person name="Shinozaki K."/>
            <person name="Davis R.W."/>
            <person name="Theologis A."/>
            <person name="Ecker J.R."/>
        </authorList>
    </citation>
    <scope>NUCLEOTIDE SEQUENCE [LARGE SCALE MRNA]</scope>
    <source>
        <strain>cv. Columbia</strain>
    </source>
</reference>
<reference key="4">
    <citation type="journal article" date="2001" name="Plant Physiol.">
        <title>Phylogenetic relationships within cation transporter families of Arabidopsis.</title>
        <authorList>
            <person name="Maeser P."/>
            <person name="Thomine S."/>
            <person name="Schroeder J.I."/>
            <person name="Ward J.M."/>
            <person name="Hirschi K."/>
            <person name="Sze H."/>
            <person name="Talke I.N."/>
            <person name="Amtmann A."/>
            <person name="Maathuis F.J.M."/>
            <person name="Sanders D."/>
            <person name="Harper J.F."/>
            <person name="Tchieu J."/>
            <person name="Gribskov M."/>
            <person name="Persans M.W."/>
            <person name="Salt D.E."/>
            <person name="Kim S.A."/>
            <person name="Guerinot M.L."/>
        </authorList>
    </citation>
    <scope>GENE FAMILY</scope>
    <scope>NOMENCLATURE</scope>
</reference>
<reference key="5">
    <citation type="journal article" date="2015" name="Plant Cell">
        <title>Phytosulfokine regulates growth in Arabidopsis through a response module at the plasma membrane that includes CYCLIC NUCLEOTIDE-GATED CHANNEL17, H+-ATPase, and BAK1.</title>
        <authorList>
            <person name="Ladwig F."/>
            <person name="Dahlke R.I."/>
            <person name="Stuehrwohldt N."/>
            <person name="Hartmann J."/>
            <person name="Harter K."/>
            <person name="Sauter M."/>
        </authorList>
    </citation>
    <scope>FUNCTION</scope>
    <scope>INTERACTION WITH AHA1; AHA2 AND BAK1</scope>
    <scope>LACK OF INTERACTION WITH PSKR1 AND BRI1</scope>
    <scope>SUBCELLULAR LOCATION</scope>
</reference>
<proteinExistence type="evidence at protein level"/>
<keyword id="KW-0112">Calmodulin-binding</keyword>
<keyword id="KW-0114">cAMP</keyword>
<keyword id="KW-0116">cAMP-binding</keyword>
<keyword id="KW-1003">Cell membrane</keyword>
<keyword id="KW-0140">cGMP</keyword>
<keyword id="KW-0142">cGMP-binding</keyword>
<keyword id="KW-0407">Ion channel</keyword>
<keyword id="KW-0406">Ion transport</keyword>
<keyword id="KW-1071">Ligand-gated ion channel</keyword>
<keyword id="KW-0472">Membrane</keyword>
<keyword id="KW-0547">Nucleotide-binding</keyword>
<keyword id="KW-1185">Reference proteome</keyword>
<keyword id="KW-0812">Transmembrane</keyword>
<keyword id="KW-1133">Transmembrane helix</keyword>
<keyword id="KW-0813">Transport</keyword>
<accession>Q8L7Z0</accession>
<accession>Q9M0C4</accession>
<evidence type="ECO:0000250" key="1"/>
<evidence type="ECO:0000255" key="2"/>
<evidence type="ECO:0000269" key="3">
    <source>
    </source>
</evidence>
<evidence type="ECO:0000303" key="4">
    <source>
    </source>
</evidence>
<evidence type="ECO:0000305" key="5"/>
<evidence type="ECO:0000305" key="6">
    <source>
    </source>
</evidence>
<evidence type="ECO:0000312" key="7">
    <source>
        <dbReference type="Araport" id="AT4G30360"/>
    </source>
</evidence>
<evidence type="ECO:0000312" key="8">
    <source>
        <dbReference type="EMBL" id="CAB81029.1"/>
    </source>
</evidence>
<name>CNG17_ARATH</name>
<protein>
    <recommendedName>
        <fullName evidence="4">Cyclic nucleotide-gated ion channel 17</fullName>
    </recommendedName>
    <alternativeName>
        <fullName evidence="4">Cyclic nucleotide- and calmodulin-regulated ion channel 17</fullName>
    </alternativeName>
</protein>
<sequence length="720" mass="83361">MELRKDKLLMFYSEGKESKEAKWAVNDPMSKSYKLSLPSALRPDNLLPGNRLRYTDASKSKSSKVSWYKTILDPGSEIVLKWNWVFIVSCMVALFIDPLYFFVPAIGGDKNYPCARTDTSLSILVTFFRTIADLFYLLHIFIKFRTGFIAPNSSTRVFGRGELVMDPKAIAWRYIKSDFIIDLIATLPLPQIVIWFVISTTKSYRFDHNNNAIALIVLLQYIPRFYLIIPLSSQIVKATGVVTKTAWAGAAYNLLLYMLASHVLGAAWYILSVDRYTSCWKSRCNGEAGQVNCQLYYLDCDSMYDNNQMTWANVTKVFKLCDARNGEFKYGIFGNAITKNVVSSQFFERYFYCLWWGLQQLSSYGQNLSTTMFMGETTFAVLIAIFGLVLFAHLIGNMQTYLQSLTVRLEEWRLKKRDTEEWMRHRQLPEELRNRVRRYEQYKWLATRGVDEEVLLQSLPTDLRRDIQRHLCLDLVRRVPFFSQMDDQLLDAICERLVSSLCTEGTYLVREGDLISEMLFIIRGRLESSTTNGGRTGFFNSIILRPGDFCGEELLSWALLPKSTLNLPSSTRTVRALVEVEAFALRAEDLKFVANQFRRLHSKKLQHTFRFYSHHWRTWAACFIQAAWRRYKRRVMENNLTAIESMENEEGEVGEELVVVEEEECVEESPRTKMNLGVMVLASRFAANTRRGVAAQRVKDVELPRFKKPEEPDFSAEHDD</sequence>
<gene>
    <name evidence="4" type="primary">CNGC17</name>
    <name evidence="7" type="ordered locus">At4g30360</name>
    <name evidence="8" type="ORF">F17I23_300</name>
</gene>
<dbReference type="EMBL" id="AL161576">
    <property type="protein sequence ID" value="CAB81029.1"/>
    <property type="status" value="ALT_SEQ"/>
    <property type="molecule type" value="Genomic_DNA"/>
</dbReference>
<dbReference type="EMBL" id="CP002687">
    <property type="protein sequence ID" value="AEE85756.1"/>
    <property type="molecule type" value="Genomic_DNA"/>
</dbReference>
<dbReference type="EMBL" id="AY124000">
    <property type="protein sequence ID" value="AAM74509.1"/>
    <property type="molecule type" value="mRNA"/>
</dbReference>
<dbReference type="EMBL" id="BT002284">
    <property type="protein sequence ID" value="AAN72295.1"/>
    <property type="molecule type" value="mRNA"/>
</dbReference>
<dbReference type="PIR" id="A85355">
    <property type="entry name" value="A85355"/>
</dbReference>
<dbReference type="RefSeq" id="NP_194765.2">
    <property type="nucleotide sequence ID" value="NM_119182.4"/>
</dbReference>
<dbReference type="BioGRID" id="14446">
    <property type="interactions" value="19"/>
</dbReference>
<dbReference type="FunCoup" id="Q8L7Z0">
    <property type="interactions" value="303"/>
</dbReference>
<dbReference type="IntAct" id="Q8L7Z0">
    <property type="interactions" value="16"/>
</dbReference>
<dbReference type="STRING" id="3702.Q8L7Z0"/>
<dbReference type="TCDB" id="1.A.1.5.36">
    <property type="family name" value="the voltage-gated ion channel (vic) superfamily"/>
</dbReference>
<dbReference type="PaxDb" id="3702-AT4G30360.1"/>
<dbReference type="ProteomicsDB" id="241237"/>
<dbReference type="EnsemblPlants" id="AT4G30360.1">
    <property type="protein sequence ID" value="AT4G30360.1"/>
    <property type="gene ID" value="AT4G30360"/>
</dbReference>
<dbReference type="GeneID" id="829159"/>
<dbReference type="Gramene" id="AT4G30360.1">
    <property type="protein sequence ID" value="AT4G30360.1"/>
    <property type="gene ID" value="AT4G30360"/>
</dbReference>
<dbReference type="KEGG" id="ath:AT4G30360"/>
<dbReference type="Araport" id="AT4G30360"/>
<dbReference type="TAIR" id="AT4G30360">
    <property type="gene designation" value="CNGC17"/>
</dbReference>
<dbReference type="eggNOG" id="KOG0498">
    <property type="taxonomic scope" value="Eukaryota"/>
</dbReference>
<dbReference type="HOGENOM" id="CLU_013069_3_0_1"/>
<dbReference type="InParanoid" id="Q8L7Z0"/>
<dbReference type="OMA" id="MNIGVMV"/>
<dbReference type="OrthoDB" id="421226at2759"/>
<dbReference type="PhylomeDB" id="Q8L7Z0"/>
<dbReference type="PRO" id="PR:Q8L7Z0"/>
<dbReference type="Proteomes" id="UP000006548">
    <property type="component" value="Chromosome 4"/>
</dbReference>
<dbReference type="ExpressionAtlas" id="Q8L7Z0">
    <property type="expression patterns" value="baseline and differential"/>
</dbReference>
<dbReference type="GO" id="GO:0005886">
    <property type="term" value="C:plasma membrane"/>
    <property type="evidence" value="ECO:0007669"/>
    <property type="project" value="UniProtKB-SubCell"/>
</dbReference>
<dbReference type="GO" id="GO:0005516">
    <property type="term" value="F:calmodulin binding"/>
    <property type="evidence" value="ECO:0007669"/>
    <property type="project" value="UniProtKB-KW"/>
</dbReference>
<dbReference type="GO" id="GO:0030552">
    <property type="term" value="F:cAMP binding"/>
    <property type="evidence" value="ECO:0007669"/>
    <property type="project" value="UniProtKB-KW"/>
</dbReference>
<dbReference type="GO" id="GO:0030553">
    <property type="term" value="F:cGMP binding"/>
    <property type="evidence" value="ECO:0007669"/>
    <property type="project" value="UniProtKB-KW"/>
</dbReference>
<dbReference type="GO" id="GO:0005249">
    <property type="term" value="F:voltage-gated potassium channel activity"/>
    <property type="evidence" value="ECO:0007669"/>
    <property type="project" value="InterPro"/>
</dbReference>
<dbReference type="CDD" id="cd00038">
    <property type="entry name" value="CAP_ED"/>
    <property type="match status" value="1"/>
</dbReference>
<dbReference type="FunFam" id="1.10.287.630:FF:000003">
    <property type="entry name" value="Cyclic nucleotide-gated ion channel 1"/>
    <property type="match status" value="1"/>
</dbReference>
<dbReference type="FunFam" id="2.60.120.10:FF:000024">
    <property type="entry name" value="Cyclic nucleotide-gated ion channel 1"/>
    <property type="match status" value="1"/>
</dbReference>
<dbReference type="Gene3D" id="1.10.287.70">
    <property type="match status" value="1"/>
</dbReference>
<dbReference type="Gene3D" id="1.10.287.630">
    <property type="entry name" value="Helix hairpin bin"/>
    <property type="match status" value="1"/>
</dbReference>
<dbReference type="Gene3D" id="2.60.120.10">
    <property type="entry name" value="Jelly Rolls"/>
    <property type="match status" value="1"/>
</dbReference>
<dbReference type="InterPro" id="IPR000595">
    <property type="entry name" value="cNMP-bd_dom"/>
</dbReference>
<dbReference type="InterPro" id="IPR018490">
    <property type="entry name" value="cNMP-bd_dom_sf"/>
</dbReference>
<dbReference type="InterPro" id="IPR005821">
    <property type="entry name" value="Ion_trans_dom"/>
</dbReference>
<dbReference type="InterPro" id="IPR003938">
    <property type="entry name" value="K_chnl_volt-dep_EAG/ELK/ERG"/>
</dbReference>
<dbReference type="InterPro" id="IPR014710">
    <property type="entry name" value="RmlC-like_jellyroll"/>
</dbReference>
<dbReference type="PANTHER" id="PTHR45651">
    <property type="entry name" value="CYCLIC NUCLEOTIDE-GATED ION CHANNEL 15-RELATED-RELATED"/>
    <property type="match status" value="1"/>
</dbReference>
<dbReference type="PANTHER" id="PTHR45651:SF69">
    <property type="entry name" value="CYCLIC NUCLEOTIDE-GATED ION CHANNEL 17"/>
    <property type="match status" value="1"/>
</dbReference>
<dbReference type="Pfam" id="PF00027">
    <property type="entry name" value="cNMP_binding"/>
    <property type="match status" value="1"/>
</dbReference>
<dbReference type="Pfam" id="PF00520">
    <property type="entry name" value="Ion_trans"/>
    <property type="match status" value="1"/>
</dbReference>
<dbReference type="PRINTS" id="PR01463">
    <property type="entry name" value="EAGCHANLFMLY"/>
</dbReference>
<dbReference type="SMART" id="SM00100">
    <property type="entry name" value="cNMP"/>
    <property type="match status" value="1"/>
</dbReference>
<dbReference type="SUPFAM" id="SSF51206">
    <property type="entry name" value="cAMP-binding domain-like"/>
    <property type="match status" value="1"/>
</dbReference>
<dbReference type="SUPFAM" id="SSF81324">
    <property type="entry name" value="Voltage-gated potassium channels"/>
    <property type="match status" value="1"/>
</dbReference>
<dbReference type="PROSITE" id="PS50042">
    <property type="entry name" value="CNMP_BINDING_3"/>
    <property type="match status" value="1"/>
</dbReference>
<organism>
    <name type="scientific">Arabidopsis thaliana</name>
    <name type="common">Mouse-ear cress</name>
    <dbReference type="NCBI Taxonomy" id="3702"/>
    <lineage>
        <taxon>Eukaryota</taxon>
        <taxon>Viridiplantae</taxon>
        <taxon>Streptophyta</taxon>
        <taxon>Embryophyta</taxon>
        <taxon>Tracheophyta</taxon>
        <taxon>Spermatophyta</taxon>
        <taxon>Magnoliopsida</taxon>
        <taxon>eudicotyledons</taxon>
        <taxon>Gunneridae</taxon>
        <taxon>Pentapetalae</taxon>
        <taxon>rosids</taxon>
        <taxon>malvids</taxon>
        <taxon>Brassicales</taxon>
        <taxon>Brassicaceae</taxon>
        <taxon>Camelineae</taxon>
        <taxon>Arabidopsis</taxon>
    </lineage>
</organism>